<name>CAPSD_PVXX3</name>
<feature type="chain" id="PRO_0000222628" description="Coat protein">
    <location>
        <begin position="1"/>
        <end position="237"/>
    </location>
</feature>
<feature type="region of interest" description="Disordered" evidence="1">
    <location>
        <begin position="1"/>
        <end position="24"/>
    </location>
</feature>
<feature type="helix" evidence="3">
    <location>
        <begin position="31"/>
        <end position="33"/>
    </location>
</feature>
<feature type="helix" evidence="3">
    <location>
        <begin position="39"/>
        <end position="43"/>
    </location>
</feature>
<feature type="strand" evidence="3">
    <location>
        <begin position="51"/>
        <end position="53"/>
    </location>
</feature>
<feature type="helix" evidence="3">
    <location>
        <begin position="56"/>
        <end position="68"/>
    </location>
</feature>
<feature type="helix" evidence="3">
    <location>
        <begin position="73"/>
        <end position="75"/>
    </location>
</feature>
<feature type="helix" evidence="3">
    <location>
        <begin position="76"/>
        <end position="89"/>
    </location>
</feature>
<feature type="strand" evidence="3">
    <location>
        <begin position="103"/>
        <end position="107"/>
    </location>
</feature>
<feature type="helix" evidence="3">
    <location>
        <begin position="110"/>
        <end position="117"/>
    </location>
</feature>
<feature type="turn" evidence="3">
    <location>
        <begin position="118"/>
        <end position="120"/>
    </location>
</feature>
<feature type="helix" evidence="3">
    <location>
        <begin position="123"/>
        <end position="129"/>
    </location>
</feature>
<feature type="helix" evidence="3">
    <location>
        <begin position="131"/>
        <end position="141"/>
    </location>
</feature>
<feature type="turn" evidence="3">
    <location>
        <begin position="146"/>
        <end position="152"/>
    </location>
</feature>
<feature type="helix" evidence="3">
    <location>
        <begin position="155"/>
        <end position="160"/>
    </location>
</feature>
<feature type="helix" evidence="3">
    <location>
        <begin position="165"/>
        <end position="168"/>
    </location>
</feature>
<feature type="helix" evidence="3">
    <location>
        <begin position="186"/>
        <end position="205"/>
    </location>
</feature>
<feature type="helix" evidence="3">
    <location>
        <begin position="215"/>
        <end position="218"/>
    </location>
</feature>
<feature type="strand" evidence="3">
    <location>
        <begin position="222"/>
        <end position="225"/>
    </location>
</feature>
<feature type="helix" evidence="3">
    <location>
        <begin position="228"/>
        <end position="230"/>
    </location>
</feature>
<protein>
    <recommendedName>
        <fullName>Coat protein</fullName>
    </recommendedName>
    <alternativeName>
        <fullName>Capsid protein</fullName>
        <shortName>CP</shortName>
    </alternativeName>
</protein>
<evidence type="ECO:0000256" key="1">
    <source>
        <dbReference type="SAM" id="MobiDB-lite"/>
    </source>
</evidence>
<evidence type="ECO:0000305" key="2"/>
<evidence type="ECO:0007829" key="3">
    <source>
        <dbReference type="PDB" id="6R7G"/>
    </source>
</evidence>
<organismHost>
    <name type="scientific">Brassica campestris</name>
    <name type="common">Field mustard</name>
    <dbReference type="NCBI Taxonomy" id="3711"/>
</organismHost>
<organismHost>
    <name type="scientific">Solanum tuberosum</name>
    <name type="common">Potato</name>
    <dbReference type="NCBI Taxonomy" id="4113"/>
</organismHost>
<accession>P17782</accession>
<comment type="function">
    <text>Required for genome encapsidation. Forms ribonucleoprotein complexes along with TGB1 helicase and viral RNA.</text>
</comment>
<comment type="subcellular location">
    <subcellularLocation>
        <location evidence="2">Virion</location>
    </subcellularLocation>
</comment>
<comment type="similarity">
    <text evidence="2">Belongs to the potexvirus capsid protein family.</text>
</comment>
<keyword id="KW-0002">3D-structure</keyword>
<keyword id="KW-0167">Capsid protein</keyword>
<keyword id="KW-1139">Helical capsid protein</keyword>
<keyword id="KW-1185">Reference proteome</keyword>
<keyword id="KW-0687">Ribonucleoprotein</keyword>
<keyword id="KW-0946">Virion</keyword>
<sequence>MSAPASTTQATGSTTSTTTKTAGATPATASGLFTIPDGDFFSTARAIVASNAVATNEDLSKIEAIWKDMKVPTDTMAQAAWDLVRHCADVGSSAQTEMIDTGPYSNGISRARLAAAIKEVCTLRQFCMKYAPVVWNWMLTNNSPPANWQAQGFKPEHKFAAFDFFNGVTNPAAIMPKEGLIRPPSEAEMNAAQTAAFVKITKARAQSNDFASLDAAVTRGRITGTTTAEAVVTLPPP</sequence>
<dbReference type="EMBL" id="D00344">
    <property type="protein sequence ID" value="BAA00253.1"/>
    <property type="molecule type" value="Genomic_RNA"/>
</dbReference>
<dbReference type="PIR" id="JA0106">
    <property type="entry name" value="VCWGPV"/>
</dbReference>
<dbReference type="RefSeq" id="YP_002332933.1">
    <property type="nucleotide sequence ID" value="NC_011620.1"/>
</dbReference>
<dbReference type="PDB" id="6R7G">
    <property type="method" value="EM"/>
    <property type="resolution" value="2.20 A"/>
    <property type="chains" value="A/B/C/D/E/F/G/H/I/J/K/L/M=29-237"/>
</dbReference>
<dbReference type="PDBsum" id="6R7G"/>
<dbReference type="SMR" id="P17782"/>
<dbReference type="GeneID" id="7065758"/>
<dbReference type="KEGG" id="vg:7065758"/>
<dbReference type="Proteomes" id="UP000008687">
    <property type="component" value="Segment"/>
</dbReference>
<dbReference type="GO" id="GO:0019029">
    <property type="term" value="C:helical viral capsid"/>
    <property type="evidence" value="ECO:0007669"/>
    <property type="project" value="UniProtKB-KW"/>
</dbReference>
<dbReference type="GO" id="GO:1990904">
    <property type="term" value="C:ribonucleoprotein complex"/>
    <property type="evidence" value="ECO:0007669"/>
    <property type="project" value="UniProtKB-KW"/>
</dbReference>
<dbReference type="GO" id="GO:0005198">
    <property type="term" value="F:structural molecule activity"/>
    <property type="evidence" value="ECO:0007669"/>
    <property type="project" value="InterPro"/>
</dbReference>
<dbReference type="InterPro" id="IPR000052">
    <property type="entry name" value="Pltvir_coat"/>
</dbReference>
<dbReference type="Pfam" id="PF00286">
    <property type="entry name" value="Flexi_CP"/>
    <property type="match status" value="1"/>
</dbReference>
<dbReference type="PRINTS" id="PR00232">
    <property type="entry name" value="POTXCARLCOAT"/>
</dbReference>
<dbReference type="PROSITE" id="PS00418">
    <property type="entry name" value="POTEX_CARLAVIRUS_COAT"/>
    <property type="match status" value="1"/>
</dbReference>
<organism>
    <name type="scientific">Potato virus X (strain X3)</name>
    <name type="common">PVX</name>
    <dbReference type="NCBI Taxonomy" id="12185"/>
    <lineage>
        <taxon>Viruses</taxon>
        <taxon>Riboviria</taxon>
        <taxon>Orthornavirae</taxon>
        <taxon>Kitrinoviricota</taxon>
        <taxon>Alsuviricetes</taxon>
        <taxon>Tymovirales</taxon>
        <taxon>Alphaflexiviridae</taxon>
        <taxon>Potexvirus</taxon>
        <taxon>Potato virus X</taxon>
    </lineage>
</organism>
<reference key="1">
    <citation type="journal article" date="1988" name="J. Gen. Virol.">
        <title>The complete nucleotide sequence of potato virus X and its homologies at the amino acid level with various plus-stranded RNA viruses.</title>
        <authorList>
            <person name="Huisman M.J."/>
            <person name="Linthorst H.J.M."/>
            <person name="Bol J.F."/>
            <person name="Cornelissen B.J.C."/>
        </authorList>
    </citation>
    <scope>NUCLEOTIDE SEQUENCE [GENOMIC RNA]</scope>
</reference>
<reference key="2">
    <citation type="journal article" date="2005" name="Mol. Plant Microbe Interact.">
        <title>A new cell-to-cell transport model for Potexviruses.</title>
        <authorList>
            <person name="Verchot-Lubicz J."/>
        </authorList>
    </citation>
    <scope>REVIEW</scope>
</reference>
<proteinExistence type="evidence at protein level"/>